<organism>
    <name type="scientific">Schizosaccharomyces pombe (strain 972 / ATCC 24843)</name>
    <name type="common">Fission yeast</name>
    <dbReference type="NCBI Taxonomy" id="284812"/>
    <lineage>
        <taxon>Eukaryota</taxon>
        <taxon>Fungi</taxon>
        <taxon>Dikarya</taxon>
        <taxon>Ascomycota</taxon>
        <taxon>Taphrinomycotina</taxon>
        <taxon>Schizosaccharomycetes</taxon>
        <taxon>Schizosaccharomycetales</taxon>
        <taxon>Schizosaccharomycetaceae</taxon>
        <taxon>Schizosaccharomyces</taxon>
    </lineage>
</organism>
<keyword id="KW-0539">Nucleus</keyword>
<keyword id="KW-0597">Phosphoprotein</keyword>
<keyword id="KW-1185">Reference proteome</keyword>
<keyword id="KW-0677">Repeat</keyword>
<accession>O42975</accession>
<protein>
    <recommendedName>
        <fullName>Protein NRDE2 homolog</fullName>
    </recommendedName>
</protein>
<proteinExistence type="evidence at protein level"/>
<evidence type="ECO:0000256" key="1">
    <source>
        <dbReference type="SAM" id="MobiDB-lite"/>
    </source>
</evidence>
<evidence type="ECO:0000269" key="2">
    <source>
    </source>
</evidence>
<evidence type="ECO:0000269" key="3">
    <source>
    </source>
</evidence>
<evidence type="ECO:0000305" key="4"/>
<reference key="1">
    <citation type="journal article" date="2002" name="Nature">
        <title>The genome sequence of Schizosaccharomyces pombe.</title>
        <authorList>
            <person name="Wood V."/>
            <person name="Gwilliam R."/>
            <person name="Rajandream M.A."/>
            <person name="Lyne M.H."/>
            <person name="Lyne R."/>
            <person name="Stewart A."/>
            <person name="Sgouros J.G."/>
            <person name="Peat N."/>
            <person name="Hayles J."/>
            <person name="Baker S.G."/>
            <person name="Basham D."/>
            <person name="Bowman S."/>
            <person name="Brooks K."/>
            <person name="Brown D."/>
            <person name="Brown S."/>
            <person name="Chillingworth T."/>
            <person name="Churcher C.M."/>
            <person name="Collins M."/>
            <person name="Connor R."/>
            <person name="Cronin A."/>
            <person name="Davis P."/>
            <person name="Feltwell T."/>
            <person name="Fraser A."/>
            <person name="Gentles S."/>
            <person name="Goble A."/>
            <person name="Hamlin N."/>
            <person name="Harris D.E."/>
            <person name="Hidalgo J."/>
            <person name="Hodgson G."/>
            <person name="Holroyd S."/>
            <person name="Hornsby T."/>
            <person name="Howarth S."/>
            <person name="Huckle E.J."/>
            <person name="Hunt S."/>
            <person name="Jagels K."/>
            <person name="James K.D."/>
            <person name="Jones L."/>
            <person name="Jones M."/>
            <person name="Leather S."/>
            <person name="McDonald S."/>
            <person name="McLean J."/>
            <person name="Mooney P."/>
            <person name="Moule S."/>
            <person name="Mungall K.L."/>
            <person name="Murphy L.D."/>
            <person name="Niblett D."/>
            <person name="Odell C."/>
            <person name="Oliver K."/>
            <person name="O'Neil S."/>
            <person name="Pearson D."/>
            <person name="Quail M.A."/>
            <person name="Rabbinowitsch E."/>
            <person name="Rutherford K.M."/>
            <person name="Rutter S."/>
            <person name="Saunders D."/>
            <person name="Seeger K."/>
            <person name="Sharp S."/>
            <person name="Skelton J."/>
            <person name="Simmonds M.N."/>
            <person name="Squares R."/>
            <person name="Squares S."/>
            <person name="Stevens K."/>
            <person name="Taylor K."/>
            <person name="Taylor R.G."/>
            <person name="Tivey A."/>
            <person name="Walsh S.V."/>
            <person name="Warren T."/>
            <person name="Whitehead S."/>
            <person name="Woodward J.R."/>
            <person name="Volckaert G."/>
            <person name="Aert R."/>
            <person name="Robben J."/>
            <person name="Grymonprez B."/>
            <person name="Weltjens I."/>
            <person name="Vanstreels E."/>
            <person name="Rieger M."/>
            <person name="Schaefer M."/>
            <person name="Mueller-Auer S."/>
            <person name="Gabel C."/>
            <person name="Fuchs M."/>
            <person name="Duesterhoeft A."/>
            <person name="Fritzc C."/>
            <person name="Holzer E."/>
            <person name="Moestl D."/>
            <person name="Hilbert H."/>
            <person name="Borzym K."/>
            <person name="Langer I."/>
            <person name="Beck A."/>
            <person name="Lehrach H."/>
            <person name="Reinhardt R."/>
            <person name="Pohl T.M."/>
            <person name="Eger P."/>
            <person name="Zimmermann W."/>
            <person name="Wedler H."/>
            <person name="Wambutt R."/>
            <person name="Purnelle B."/>
            <person name="Goffeau A."/>
            <person name="Cadieu E."/>
            <person name="Dreano S."/>
            <person name="Gloux S."/>
            <person name="Lelaure V."/>
            <person name="Mottier S."/>
            <person name="Galibert F."/>
            <person name="Aves S.J."/>
            <person name="Xiang Z."/>
            <person name="Hunt C."/>
            <person name="Moore K."/>
            <person name="Hurst S.M."/>
            <person name="Lucas M."/>
            <person name="Rochet M."/>
            <person name="Gaillardin C."/>
            <person name="Tallada V.A."/>
            <person name="Garzon A."/>
            <person name="Thode G."/>
            <person name="Daga R.R."/>
            <person name="Cruzado L."/>
            <person name="Jimenez J."/>
            <person name="Sanchez M."/>
            <person name="del Rey F."/>
            <person name="Benito J."/>
            <person name="Dominguez A."/>
            <person name="Revuelta J.L."/>
            <person name="Moreno S."/>
            <person name="Armstrong J."/>
            <person name="Forsburg S.L."/>
            <person name="Cerutti L."/>
            <person name="Lowe T."/>
            <person name="McCombie W.R."/>
            <person name="Paulsen I."/>
            <person name="Potashkin J."/>
            <person name="Shpakovski G.V."/>
            <person name="Ussery D."/>
            <person name="Barrell B.G."/>
            <person name="Nurse P."/>
        </authorList>
    </citation>
    <scope>NUCLEOTIDE SEQUENCE [LARGE SCALE GENOMIC DNA]</scope>
    <source>
        <strain>972 / ATCC 24843</strain>
    </source>
</reference>
<reference key="2">
    <citation type="journal article" date="2006" name="Nat. Biotechnol.">
        <title>ORFeome cloning and global analysis of protein localization in the fission yeast Schizosaccharomyces pombe.</title>
        <authorList>
            <person name="Matsuyama A."/>
            <person name="Arai R."/>
            <person name="Yashiroda Y."/>
            <person name="Shirai A."/>
            <person name="Kamata A."/>
            <person name="Sekido S."/>
            <person name="Kobayashi Y."/>
            <person name="Hashimoto A."/>
            <person name="Hamamoto M."/>
            <person name="Hiraoka Y."/>
            <person name="Horinouchi S."/>
            <person name="Yoshida M."/>
        </authorList>
    </citation>
    <scope>SUBCELLULAR LOCATION [LARGE SCALE ANALYSIS]</scope>
</reference>
<reference key="3">
    <citation type="journal article" date="2008" name="J. Proteome Res.">
        <title>Phosphoproteome analysis of fission yeast.</title>
        <authorList>
            <person name="Wilson-Grady J.T."/>
            <person name="Villen J."/>
            <person name="Gygi S.P."/>
        </authorList>
    </citation>
    <scope>PHOSPHORYLATION [LARGE SCALE ANALYSIS] AT SER-970</scope>
    <scope>IDENTIFICATION BY MASS SPECTROMETRY</scope>
</reference>
<sequence>MPSNHNTSVPKFSSFNSVKAKKNPITKSNKKYRSSHDQVSSNHAKSSFPSHRSIQSNFAVDTKGEKQNLLYGINKRPVPKYHRSSSSVYGSAPLLRIVKESKEGITLNKKKSLEIKYDEERSFDEKENDESEFEDGQQGFIPLLVNRNSDPSEKSTFSLNILKAIKETDEEIKKNPGKARLWIKMCEYQERLLFDEFRRSNSDDIKGKLKIENNSRSVKLSILEKALKEVKGCDHEILVSYYLQLGSEEWSKEETNQKFEEVLIEHPGYLNLWMKYAEYFTGISEFTFNDCLNMFSKCFKFLKQKLSDRKSCKERESTDVTSNFEVEEAILHLLIRLCDFLKNCGYYELAWSIFQANMELCYFYPRYLEKKLDSTFFESFSKFWNSDTPKFSEENARGWCNVLDDESSQQNQNFSSEIGIFQTVKLWYLNESKFDTNPPPRSTMSCRKLSGIDDPFRYIVFNDIQDFIVCFESETIAFAFKYKFFAFCGVPLFPPGISTNSWFASYDKGIYNLLFGMASSESFINGQIAEKNSFQFPCSILPSYIDLFISLMSFKNLNFKLFDYNLAHHVKESMERAFHQLVFSADDEYLASVYLIYLKQMETKNLSEEKPQVNKIVKKILKKYDSSVSVWNTYAQLEHLSGAFTMAETIFKTIFQIHASQLRYIDNLNVYKNWAFRKLLINDTEGCLVIIKCLLFPGDKSLTSDNNRASEMLFGMLENCASKEELLYVCLIYTIWTHCTDMDSMDNCVYLCIQKFESYGWGASSEMECYFSYCSLIFYYQATTLQFYNLPKVRPFFEKGVTLFSANTAIWEVYIFFESKLRQENKPKIRAMKILKSASNAVVTACWYLFYVAVQQIEPTNSQYFLRTLDITLNNEKLKSVAKFWRIYLKILNLRLNGTEWVSAITTKALASCPCNKGVCMDVIDLLLKKEMESRAIICYIIMLEKGFRVHNEIRRDVLKFERGDELILSPN</sequence>
<gene>
    <name type="ORF">SPBC20F10.05</name>
</gene>
<name>NRDE2_SCHPO</name>
<feature type="chain" id="PRO_0000343144" description="Protein NRDE2 homolog">
    <location>
        <begin position="1"/>
        <end position="972"/>
    </location>
</feature>
<feature type="repeat" description="HAT 1">
    <location>
        <begin position="159"/>
        <end position="191"/>
    </location>
</feature>
<feature type="repeat" description="HAT 2">
    <location>
        <begin position="250"/>
        <end position="282"/>
    </location>
</feature>
<feature type="repeat" description="HAT 3">
    <location>
        <begin position="318"/>
        <end position="350"/>
    </location>
</feature>
<feature type="repeat" description="HAT 4">
    <location>
        <begin position="355"/>
        <end position="386"/>
    </location>
</feature>
<feature type="repeat" description="HAT 5">
    <location>
        <begin position="608"/>
        <end position="640"/>
    </location>
</feature>
<feature type="repeat" description="HAT 6">
    <location>
        <begin position="788"/>
        <end position="820"/>
    </location>
</feature>
<feature type="repeat" description="HAT 7">
    <location>
        <begin position="860"/>
        <end position="894"/>
    </location>
</feature>
<feature type="region of interest" description="Disordered" evidence="1">
    <location>
        <begin position="1"/>
        <end position="61"/>
    </location>
</feature>
<feature type="compositionally biased region" description="Polar residues" evidence="1">
    <location>
        <begin position="1"/>
        <end position="17"/>
    </location>
</feature>
<feature type="compositionally biased region" description="Basic residues" evidence="1">
    <location>
        <begin position="19"/>
        <end position="33"/>
    </location>
</feature>
<feature type="compositionally biased region" description="Polar residues" evidence="1">
    <location>
        <begin position="37"/>
        <end position="59"/>
    </location>
</feature>
<feature type="modified residue" description="Phosphoserine" evidence="3">
    <location>
        <position position="970"/>
    </location>
</feature>
<dbReference type="EMBL" id="CU329671">
    <property type="protein sequence ID" value="CAA16845.1"/>
    <property type="molecule type" value="Genomic_DNA"/>
</dbReference>
<dbReference type="PIR" id="T39876">
    <property type="entry name" value="T39876"/>
</dbReference>
<dbReference type="BioGRID" id="277216">
    <property type="interactions" value="61"/>
</dbReference>
<dbReference type="FunCoup" id="O42975">
    <property type="interactions" value="316"/>
</dbReference>
<dbReference type="IntAct" id="O42975">
    <property type="interactions" value="10"/>
</dbReference>
<dbReference type="STRING" id="284812.O42975"/>
<dbReference type="iPTMnet" id="O42975"/>
<dbReference type="SwissPalm" id="O42975"/>
<dbReference type="PaxDb" id="4896-SPBC20F10.05.1"/>
<dbReference type="EnsemblFungi" id="SPBC20F10.05.1">
    <property type="protein sequence ID" value="SPBC20F10.05.1:pep"/>
    <property type="gene ID" value="SPBC20F10.05"/>
</dbReference>
<dbReference type="KEGG" id="spo:2540691"/>
<dbReference type="PomBase" id="SPBC20F10.05"/>
<dbReference type="VEuPathDB" id="FungiDB:SPBC20F10.05"/>
<dbReference type="eggNOG" id="KOG1972">
    <property type="taxonomic scope" value="Eukaryota"/>
</dbReference>
<dbReference type="HOGENOM" id="CLU_312419_0_0_1"/>
<dbReference type="InParanoid" id="O42975"/>
<dbReference type="OMA" id="QEYARPN"/>
<dbReference type="PhylomeDB" id="O42975"/>
<dbReference type="PRO" id="PR:O42975"/>
<dbReference type="Proteomes" id="UP000002485">
    <property type="component" value="Chromosome II"/>
</dbReference>
<dbReference type="GO" id="GO:0005634">
    <property type="term" value="C:nucleus"/>
    <property type="evidence" value="ECO:0007005"/>
    <property type="project" value="PomBase"/>
</dbReference>
<dbReference type="GO" id="GO:0005681">
    <property type="term" value="C:spliceosomal complex"/>
    <property type="evidence" value="ECO:0000269"/>
    <property type="project" value="PomBase"/>
</dbReference>
<dbReference type="GO" id="GO:1902369">
    <property type="term" value="P:negative regulation of RNA catabolic process"/>
    <property type="evidence" value="ECO:0000318"/>
    <property type="project" value="GO_Central"/>
</dbReference>
<dbReference type="GO" id="GO:0071030">
    <property type="term" value="P:nuclear mRNA surveillance of spliceosomal pre-mRNA splicing"/>
    <property type="evidence" value="ECO:0000315"/>
    <property type="project" value="PomBase"/>
</dbReference>
<dbReference type="GO" id="GO:0031048">
    <property type="term" value="P:regulatory ncRNA-mediated heterochromatin formation"/>
    <property type="evidence" value="ECO:0000318"/>
    <property type="project" value="GO_Central"/>
</dbReference>
<dbReference type="GO" id="GO:1902795">
    <property type="term" value="P:siRNA-mediated facultative heterochromatin formation"/>
    <property type="evidence" value="ECO:0000316"/>
    <property type="project" value="PomBase"/>
</dbReference>
<dbReference type="Gene3D" id="1.25.40.10">
    <property type="entry name" value="Tetratricopeptide repeat domain"/>
    <property type="match status" value="1"/>
</dbReference>
<dbReference type="InterPro" id="IPR013633">
    <property type="entry name" value="NRDE-2"/>
</dbReference>
<dbReference type="InterPro" id="IPR011990">
    <property type="entry name" value="TPR-like_helical_dom_sf"/>
</dbReference>
<dbReference type="PANTHER" id="PTHR13471:SF0">
    <property type="entry name" value="NUCLEAR EXOSOME REGULATOR NRDE2"/>
    <property type="match status" value="1"/>
</dbReference>
<dbReference type="PANTHER" id="PTHR13471">
    <property type="entry name" value="TETRATRICOPEPTIDE-LIKE HELICAL"/>
    <property type="match status" value="1"/>
</dbReference>
<dbReference type="Pfam" id="PF08424">
    <property type="entry name" value="NRDE-2"/>
    <property type="match status" value="1"/>
</dbReference>
<comment type="interaction">
    <interactant intactId="EBI-9003631">
        <id>O42975</id>
    </interactant>
    <interactant intactId="EBI-538866">
        <id>O94316</id>
        <label>cwf10</label>
    </interactant>
    <organismsDiffer>false</organismsDiffer>
    <experiments>3</experiments>
</comment>
<comment type="interaction">
    <interactant intactId="EBI-9003631">
        <id>O42975</id>
    </interactant>
    <interactant intactId="EBI-8993901">
        <id>O13799</id>
        <label>SPAC17H9.02</label>
    </interactant>
    <organismsDiffer>false</organismsDiffer>
    <experiments>3</experiments>
</comment>
<comment type="subcellular location">
    <subcellularLocation>
        <location evidence="2">Nucleus</location>
    </subcellularLocation>
</comment>
<comment type="similarity">
    <text evidence="4">Belongs to the NRDE2 family.</text>
</comment>